<accession>A9KCF2</accession>
<protein>
    <recommendedName>
        <fullName evidence="1">Dihydroorotate dehydrogenase (quinone)</fullName>
        <ecNumber evidence="1">1.3.5.2</ecNumber>
    </recommendedName>
    <alternativeName>
        <fullName evidence="1">DHOdehase</fullName>
        <shortName evidence="1">DHOD</shortName>
        <shortName evidence="1">DHODase</shortName>
    </alternativeName>
    <alternativeName>
        <fullName evidence="1">Dihydroorotate oxidase</fullName>
    </alternativeName>
</protein>
<keyword id="KW-1003">Cell membrane</keyword>
<keyword id="KW-0285">Flavoprotein</keyword>
<keyword id="KW-0288">FMN</keyword>
<keyword id="KW-0472">Membrane</keyword>
<keyword id="KW-0560">Oxidoreductase</keyword>
<keyword id="KW-0665">Pyrimidine biosynthesis</keyword>
<comment type="function">
    <text evidence="1">Catalyzes the conversion of dihydroorotate to orotate with quinone as electron acceptor.</text>
</comment>
<comment type="catalytic activity">
    <reaction evidence="1">
        <text>(S)-dihydroorotate + a quinone = orotate + a quinol</text>
        <dbReference type="Rhea" id="RHEA:30187"/>
        <dbReference type="ChEBI" id="CHEBI:24646"/>
        <dbReference type="ChEBI" id="CHEBI:30839"/>
        <dbReference type="ChEBI" id="CHEBI:30864"/>
        <dbReference type="ChEBI" id="CHEBI:132124"/>
        <dbReference type="EC" id="1.3.5.2"/>
    </reaction>
</comment>
<comment type="cofactor">
    <cofactor evidence="1">
        <name>FMN</name>
        <dbReference type="ChEBI" id="CHEBI:58210"/>
    </cofactor>
    <text evidence="1">Binds 1 FMN per subunit.</text>
</comment>
<comment type="pathway">
    <text evidence="1">Pyrimidine metabolism; UMP biosynthesis via de novo pathway; orotate from (S)-dihydroorotate (quinone route): step 1/1.</text>
</comment>
<comment type="subunit">
    <text evidence="1">Monomer.</text>
</comment>
<comment type="subcellular location">
    <subcellularLocation>
        <location evidence="1">Cell membrane</location>
        <topology evidence="1">Peripheral membrane protein</topology>
    </subcellularLocation>
</comment>
<comment type="similarity">
    <text evidence="1">Belongs to the dihydroorotate dehydrogenase family. Type 2 subfamily.</text>
</comment>
<dbReference type="EC" id="1.3.5.2" evidence="1"/>
<dbReference type="EMBL" id="CP000733">
    <property type="protein sequence ID" value="ABS77453.1"/>
    <property type="molecule type" value="Genomic_DNA"/>
</dbReference>
<dbReference type="RefSeq" id="WP_005768550.1">
    <property type="nucleotide sequence ID" value="NC_009727.1"/>
</dbReference>
<dbReference type="SMR" id="A9KCF2"/>
<dbReference type="KEGG" id="cbd:CBUD_1077"/>
<dbReference type="HOGENOM" id="CLU_013640_2_0_6"/>
<dbReference type="UniPathway" id="UPA00070">
    <property type="reaction ID" value="UER00946"/>
</dbReference>
<dbReference type="Proteomes" id="UP000008555">
    <property type="component" value="Chromosome"/>
</dbReference>
<dbReference type="GO" id="GO:0005737">
    <property type="term" value="C:cytoplasm"/>
    <property type="evidence" value="ECO:0007669"/>
    <property type="project" value="InterPro"/>
</dbReference>
<dbReference type="GO" id="GO:0005886">
    <property type="term" value="C:plasma membrane"/>
    <property type="evidence" value="ECO:0007669"/>
    <property type="project" value="UniProtKB-SubCell"/>
</dbReference>
<dbReference type="GO" id="GO:0106430">
    <property type="term" value="F:dihydroorotate dehydrogenase (quinone) activity"/>
    <property type="evidence" value="ECO:0007669"/>
    <property type="project" value="UniProtKB-EC"/>
</dbReference>
<dbReference type="GO" id="GO:0006207">
    <property type="term" value="P:'de novo' pyrimidine nucleobase biosynthetic process"/>
    <property type="evidence" value="ECO:0007669"/>
    <property type="project" value="InterPro"/>
</dbReference>
<dbReference type="GO" id="GO:0044205">
    <property type="term" value="P:'de novo' UMP biosynthetic process"/>
    <property type="evidence" value="ECO:0007669"/>
    <property type="project" value="UniProtKB-UniRule"/>
</dbReference>
<dbReference type="CDD" id="cd04738">
    <property type="entry name" value="DHOD_2_like"/>
    <property type="match status" value="1"/>
</dbReference>
<dbReference type="FunFam" id="3.20.20.70:FF:000028">
    <property type="entry name" value="Dihydroorotate dehydrogenase (quinone)"/>
    <property type="match status" value="1"/>
</dbReference>
<dbReference type="Gene3D" id="3.20.20.70">
    <property type="entry name" value="Aldolase class I"/>
    <property type="match status" value="1"/>
</dbReference>
<dbReference type="HAMAP" id="MF_00225">
    <property type="entry name" value="DHO_dh_type2"/>
    <property type="match status" value="1"/>
</dbReference>
<dbReference type="InterPro" id="IPR013785">
    <property type="entry name" value="Aldolase_TIM"/>
</dbReference>
<dbReference type="InterPro" id="IPR050074">
    <property type="entry name" value="DHO_dehydrogenase"/>
</dbReference>
<dbReference type="InterPro" id="IPR012135">
    <property type="entry name" value="Dihydroorotate_DH_1_2"/>
</dbReference>
<dbReference type="InterPro" id="IPR005719">
    <property type="entry name" value="Dihydroorotate_DH_2"/>
</dbReference>
<dbReference type="InterPro" id="IPR005720">
    <property type="entry name" value="Dihydroorotate_DH_cat"/>
</dbReference>
<dbReference type="InterPro" id="IPR001295">
    <property type="entry name" value="Dihydroorotate_DH_CS"/>
</dbReference>
<dbReference type="NCBIfam" id="NF003644">
    <property type="entry name" value="PRK05286.1-1"/>
    <property type="match status" value="1"/>
</dbReference>
<dbReference type="NCBIfam" id="NF003645">
    <property type="entry name" value="PRK05286.1-2"/>
    <property type="match status" value="1"/>
</dbReference>
<dbReference type="NCBIfam" id="NF003646">
    <property type="entry name" value="PRK05286.1-4"/>
    <property type="match status" value="1"/>
</dbReference>
<dbReference type="NCBIfam" id="NF003652">
    <property type="entry name" value="PRK05286.2-5"/>
    <property type="match status" value="1"/>
</dbReference>
<dbReference type="NCBIfam" id="TIGR01036">
    <property type="entry name" value="pyrD_sub2"/>
    <property type="match status" value="1"/>
</dbReference>
<dbReference type="PANTHER" id="PTHR48109:SF4">
    <property type="entry name" value="DIHYDROOROTATE DEHYDROGENASE (QUINONE), MITOCHONDRIAL"/>
    <property type="match status" value="1"/>
</dbReference>
<dbReference type="PANTHER" id="PTHR48109">
    <property type="entry name" value="DIHYDROOROTATE DEHYDROGENASE (QUINONE), MITOCHONDRIAL-RELATED"/>
    <property type="match status" value="1"/>
</dbReference>
<dbReference type="Pfam" id="PF01180">
    <property type="entry name" value="DHO_dh"/>
    <property type="match status" value="1"/>
</dbReference>
<dbReference type="PIRSF" id="PIRSF000164">
    <property type="entry name" value="DHO_oxidase"/>
    <property type="match status" value="1"/>
</dbReference>
<dbReference type="SUPFAM" id="SSF51395">
    <property type="entry name" value="FMN-linked oxidoreductases"/>
    <property type="match status" value="1"/>
</dbReference>
<dbReference type="PROSITE" id="PS00911">
    <property type="entry name" value="DHODEHASE_1"/>
    <property type="match status" value="1"/>
</dbReference>
<dbReference type="PROSITE" id="PS00912">
    <property type="entry name" value="DHODEHASE_2"/>
    <property type="match status" value="1"/>
</dbReference>
<gene>
    <name evidence="1" type="primary">pyrD</name>
    <name type="ordered locus">CBUD_1077</name>
</gene>
<evidence type="ECO:0000255" key="1">
    <source>
        <dbReference type="HAMAP-Rule" id="MF_00225"/>
    </source>
</evidence>
<name>PYRD_COXBN</name>
<sequence length="347" mass="39314">MIYRYLRPWLFKLEPETAHALTLNCLKWFYCYWLINRRLQRFPQKPTVVFGIEFPNPVGLAAGLDKNGEYMDELLGLGFGFIEVGAVTPKPQPGNSKPRIFRLPQARALINRMGFNNLGVDYLVEQLKRRKVKGIVGVNIGKNLTTPLEKAHEDYQNCFEKLYSYVDYVTINISSPNTPELRQLQSERYLADLLTRLKEDQRRLEDQYHKRVPLFLKIAPDLTPEEIQTIATLALQHRIEGIVATNTSCSRQGTEKLPNANEAGGLSGKPLFPMTLQVVKQLHSFLGDEIPIVAVGGIFSGENAQTLINAGARLVQLYTGLIYEGPELVKNIVEFLTLSRQTREGIN</sequence>
<proteinExistence type="inferred from homology"/>
<reference key="1">
    <citation type="journal article" date="2009" name="Infect. Immun.">
        <title>Comparative genomics reveal extensive transposon-mediated genomic plasticity and diversity among potential effector proteins within the genus Coxiella.</title>
        <authorList>
            <person name="Beare P.A."/>
            <person name="Unsworth N."/>
            <person name="Andoh M."/>
            <person name="Voth D.E."/>
            <person name="Omsland A."/>
            <person name="Gilk S.D."/>
            <person name="Williams K.P."/>
            <person name="Sobral B.W."/>
            <person name="Kupko J.J. III"/>
            <person name="Porcella S.F."/>
            <person name="Samuel J.E."/>
            <person name="Heinzen R.A."/>
        </authorList>
    </citation>
    <scope>NUCLEOTIDE SEQUENCE [LARGE SCALE GENOMIC DNA]</scope>
    <source>
        <strain>Dugway 5J108-111</strain>
    </source>
</reference>
<feature type="chain" id="PRO_1000078156" description="Dihydroorotate dehydrogenase (quinone)">
    <location>
        <begin position="1"/>
        <end position="347"/>
    </location>
</feature>
<feature type="active site" description="Nucleophile" evidence="1">
    <location>
        <position position="175"/>
    </location>
</feature>
<feature type="binding site" evidence="1">
    <location>
        <begin position="62"/>
        <end position="66"/>
    </location>
    <ligand>
        <name>FMN</name>
        <dbReference type="ChEBI" id="CHEBI:58210"/>
    </ligand>
</feature>
<feature type="binding site" evidence="1">
    <location>
        <position position="66"/>
    </location>
    <ligand>
        <name>substrate</name>
    </ligand>
</feature>
<feature type="binding site" evidence="1">
    <location>
        <position position="86"/>
    </location>
    <ligand>
        <name>FMN</name>
        <dbReference type="ChEBI" id="CHEBI:58210"/>
    </ligand>
</feature>
<feature type="binding site" evidence="1">
    <location>
        <begin position="111"/>
        <end position="115"/>
    </location>
    <ligand>
        <name>substrate</name>
    </ligand>
</feature>
<feature type="binding site" evidence="1">
    <location>
        <position position="139"/>
    </location>
    <ligand>
        <name>FMN</name>
        <dbReference type="ChEBI" id="CHEBI:58210"/>
    </ligand>
</feature>
<feature type="binding site" evidence="1">
    <location>
        <position position="172"/>
    </location>
    <ligand>
        <name>FMN</name>
        <dbReference type="ChEBI" id="CHEBI:58210"/>
    </ligand>
</feature>
<feature type="binding site" evidence="1">
    <location>
        <position position="172"/>
    </location>
    <ligand>
        <name>substrate</name>
    </ligand>
</feature>
<feature type="binding site" evidence="1">
    <location>
        <position position="177"/>
    </location>
    <ligand>
        <name>substrate</name>
    </ligand>
</feature>
<feature type="binding site" evidence="1">
    <location>
        <position position="217"/>
    </location>
    <ligand>
        <name>FMN</name>
        <dbReference type="ChEBI" id="CHEBI:58210"/>
    </ligand>
</feature>
<feature type="binding site" evidence="1">
    <location>
        <position position="245"/>
    </location>
    <ligand>
        <name>FMN</name>
        <dbReference type="ChEBI" id="CHEBI:58210"/>
    </ligand>
</feature>
<feature type="binding site" evidence="1">
    <location>
        <begin position="246"/>
        <end position="247"/>
    </location>
    <ligand>
        <name>substrate</name>
    </ligand>
</feature>
<feature type="binding site" evidence="1">
    <location>
        <position position="268"/>
    </location>
    <ligand>
        <name>FMN</name>
        <dbReference type="ChEBI" id="CHEBI:58210"/>
    </ligand>
</feature>
<feature type="binding site" evidence="1">
    <location>
        <position position="297"/>
    </location>
    <ligand>
        <name>FMN</name>
        <dbReference type="ChEBI" id="CHEBI:58210"/>
    </ligand>
</feature>
<feature type="binding site" evidence="1">
    <location>
        <begin position="318"/>
        <end position="319"/>
    </location>
    <ligand>
        <name>FMN</name>
        <dbReference type="ChEBI" id="CHEBI:58210"/>
    </ligand>
</feature>
<organism>
    <name type="scientific">Coxiella burnetii (strain Dugway 5J108-111)</name>
    <dbReference type="NCBI Taxonomy" id="434922"/>
    <lineage>
        <taxon>Bacteria</taxon>
        <taxon>Pseudomonadati</taxon>
        <taxon>Pseudomonadota</taxon>
        <taxon>Gammaproteobacteria</taxon>
        <taxon>Legionellales</taxon>
        <taxon>Coxiellaceae</taxon>
        <taxon>Coxiella</taxon>
    </lineage>
</organism>